<sequence length="181" mass="20758">MSANENNLIWIDLEMTGLDPERDRIIEIATLVTDANLNILAEGPTIAVHQSDEQLALMDGWNVRTHTASGLVERVKASTMGDREAELATLEFLKQWVPAGKSPICGNSIGQDRRFLFKYMPELEAYFHYRYLDVSTLKELARRWKPEILDGFTKQGTHQAMDDIRESVAELAYYREHFIKL</sequence>
<organism>
    <name type="scientific">Escherichia coli O157:H7</name>
    <dbReference type="NCBI Taxonomy" id="83334"/>
    <lineage>
        <taxon>Bacteria</taxon>
        <taxon>Pseudomonadati</taxon>
        <taxon>Pseudomonadota</taxon>
        <taxon>Gammaproteobacteria</taxon>
        <taxon>Enterobacterales</taxon>
        <taxon>Enterobacteriaceae</taxon>
        <taxon>Escherichia</taxon>
    </lineage>
</organism>
<gene>
    <name evidence="2" type="primary">orn</name>
    <name type="ordered locus">Z5768</name>
    <name type="ordered locus">ECs5141</name>
</gene>
<proteinExistence type="inferred from homology"/>
<accession>Q8XDP0</accession>
<evidence type="ECO:0000250" key="1"/>
<evidence type="ECO:0000255" key="2">
    <source>
        <dbReference type="HAMAP-Rule" id="MF_00045"/>
    </source>
</evidence>
<evidence type="ECO:0000305" key="3"/>
<dbReference type="EC" id="3.1.15.-" evidence="2"/>
<dbReference type="EMBL" id="AE005174">
    <property type="protein sequence ID" value="AAG59361.1"/>
    <property type="status" value="ALT_INIT"/>
    <property type="molecule type" value="Genomic_DNA"/>
</dbReference>
<dbReference type="EMBL" id="BA000007">
    <property type="protein sequence ID" value="BAB38564.2"/>
    <property type="molecule type" value="Genomic_DNA"/>
</dbReference>
<dbReference type="PIR" id="E86112">
    <property type="entry name" value="E86112"/>
</dbReference>
<dbReference type="PIR" id="E91271">
    <property type="entry name" value="E91271"/>
</dbReference>
<dbReference type="RefSeq" id="NP_313168.2">
    <property type="nucleotide sequence ID" value="NC_002695.1"/>
</dbReference>
<dbReference type="RefSeq" id="WP_001302216.1">
    <property type="nucleotide sequence ID" value="NZ_VOAI01000008.1"/>
</dbReference>
<dbReference type="SMR" id="Q8XDP0"/>
<dbReference type="STRING" id="155864.Z5768"/>
<dbReference type="GeneID" id="915776"/>
<dbReference type="KEGG" id="ece:Z5768"/>
<dbReference type="KEGG" id="ecs:ECs_5141"/>
<dbReference type="PATRIC" id="fig|386585.9.peg.5374"/>
<dbReference type="eggNOG" id="COG1949">
    <property type="taxonomic scope" value="Bacteria"/>
</dbReference>
<dbReference type="HOGENOM" id="CLU_064761_2_0_6"/>
<dbReference type="OMA" id="AFFHYRN"/>
<dbReference type="Proteomes" id="UP000000558">
    <property type="component" value="Chromosome"/>
</dbReference>
<dbReference type="Proteomes" id="UP000002519">
    <property type="component" value="Chromosome"/>
</dbReference>
<dbReference type="GO" id="GO:0005737">
    <property type="term" value="C:cytoplasm"/>
    <property type="evidence" value="ECO:0007669"/>
    <property type="project" value="UniProtKB-SubCell"/>
</dbReference>
<dbReference type="GO" id="GO:0000175">
    <property type="term" value="F:3'-5'-RNA exonuclease activity"/>
    <property type="evidence" value="ECO:0007669"/>
    <property type="project" value="InterPro"/>
</dbReference>
<dbReference type="GO" id="GO:0003676">
    <property type="term" value="F:nucleic acid binding"/>
    <property type="evidence" value="ECO:0007669"/>
    <property type="project" value="InterPro"/>
</dbReference>
<dbReference type="GO" id="GO:0006259">
    <property type="term" value="P:DNA metabolic process"/>
    <property type="evidence" value="ECO:0007669"/>
    <property type="project" value="UniProtKB-ARBA"/>
</dbReference>
<dbReference type="CDD" id="cd06135">
    <property type="entry name" value="Orn"/>
    <property type="match status" value="1"/>
</dbReference>
<dbReference type="FunFam" id="3.30.420.10:FF:000003">
    <property type="entry name" value="Oligoribonuclease"/>
    <property type="match status" value="1"/>
</dbReference>
<dbReference type="Gene3D" id="3.30.420.10">
    <property type="entry name" value="Ribonuclease H-like superfamily/Ribonuclease H"/>
    <property type="match status" value="1"/>
</dbReference>
<dbReference type="HAMAP" id="MF_00045">
    <property type="entry name" value="Oligoribonuclease"/>
    <property type="match status" value="1"/>
</dbReference>
<dbReference type="InterPro" id="IPR013520">
    <property type="entry name" value="Exonuclease_RNaseT/DNA_pol3"/>
</dbReference>
<dbReference type="InterPro" id="IPR022894">
    <property type="entry name" value="Oligoribonuclease"/>
</dbReference>
<dbReference type="InterPro" id="IPR012337">
    <property type="entry name" value="RNaseH-like_sf"/>
</dbReference>
<dbReference type="InterPro" id="IPR036397">
    <property type="entry name" value="RNaseH_sf"/>
</dbReference>
<dbReference type="NCBIfam" id="NF003765">
    <property type="entry name" value="PRK05359.1"/>
    <property type="match status" value="1"/>
</dbReference>
<dbReference type="PANTHER" id="PTHR11046">
    <property type="entry name" value="OLIGORIBONUCLEASE, MITOCHONDRIAL"/>
    <property type="match status" value="1"/>
</dbReference>
<dbReference type="PANTHER" id="PTHR11046:SF0">
    <property type="entry name" value="OLIGORIBONUCLEASE, MITOCHONDRIAL"/>
    <property type="match status" value="1"/>
</dbReference>
<dbReference type="Pfam" id="PF00929">
    <property type="entry name" value="RNase_T"/>
    <property type="match status" value="1"/>
</dbReference>
<dbReference type="SMART" id="SM00479">
    <property type="entry name" value="EXOIII"/>
    <property type="match status" value="1"/>
</dbReference>
<dbReference type="SUPFAM" id="SSF53098">
    <property type="entry name" value="Ribonuclease H-like"/>
    <property type="match status" value="1"/>
</dbReference>
<name>ORN_ECO57</name>
<feature type="initiator methionine" description="Removed" evidence="1">
    <location>
        <position position="1"/>
    </location>
</feature>
<feature type="chain" id="PRO_0000111034" description="Oligoribonuclease">
    <location>
        <begin position="2"/>
        <end position="181"/>
    </location>
</feature>
<feature type="domain" description="Exonuclease" evidence="2">
    <location>
        <begin position="8"/>
        <end position="171"/>
    </location>
</feature>
<feature type="active site" evidence="2">
    <location>
        <position position="129"/>
    </location>
</feature>
<keyword id="KW-0963">Cytoplasm</keyword>
<keyword id="KW-0269">Exonuclease</keyword>
<keyword id="KW-0378">Hydrolase</keyword>
<keyword id="KW-0540">Nuclease</keyword>
<keyword id="KW-1185">Reference proteome</keyword>
<protein>
    <recommendedName>
        <fullName evidence="2">Oligoribonuclease</fullName>
        <ecNumber evidence="2">3.1.15.-</ecNumber>
    </recommendedName>
</protein>
<reference key="1">
    <citation type="journal article" date="2001" name="Nature">
        <title>Genome sequence of enterohaemorrhagic Escherichia coli O157:H7.</title>
        <authorList>
            <person name="Perna N.T."/>
            <person name="Plunkett G. III"/>
            <person name="Burland V."/>
            <person name="Mau B."/>
            <person name="Glasner J.D."/>
            <person name="Rose D.J."/>
            <person name="Mayhew G.F."/>
            <person name="Evans P.S."/>
            <person name="Gregor J."/>
            <person name="Kirkpatrick H.A."/>
            <person name="Posfai G."/>
            <person name="Hackett J."/>
            <person name="Klink S."/>
            <person name="Boutin A."/>
            <person name="Shao Y."/>
            <person name="Miller L."/>
            <person name="Grotbeck E.J."/>
            <person name="Davis N.W."/>
            <person name="Lim A."/>
            <person name="Dimalanta E.T."/>
            <person name="Potamousis K."/>
            <person name="Apodaca J."/>
            <person name="Anantharaman T.S."/>
            <person name="Lin J."/>
            <person name="Yen G."/>
            <person name="Schwartz D.C."/>
            <person name="Welch R.A."/>
            <person name="Blattner F.R."/>
        </authorList>
    </citation>
    <scope>NUCLEOTIDE SEQUENCE [LARGE SCALE GENOMIC DNA]</scope>
    <source>
        <strain>O157:H7 / EDL933 / ATCC 700927 / EHEC</strain>
    </source>
</reference>
<reference key="2">
    <citation type="journal article" date="2001" name="DNA Res.">
        <title>Complete genome sequence of enterohemorrhagic Escherichia coli O157:H7 and genomic comparison with a laboratory strain K-12.</title>
        <authorList>
            <person name="Hayashi T."/>
            <person name="Makino K."/>
            <person name="Ohnishi M."/>
            <person name="Kurokawa K."/>
            <person name="Ishii K."/>
            <person name="Yokoyama K."/>
            <person name="Han C.-G."/>
            <person name="Ohtsubo E."/>
            <person name="Nakayama K."/>
            <person name="Murata T."/>
            <person name="Tanaka M."/>
            <person name="Tobe T."/>
            <person name="Iida T."/>
            <person name="Takami H."/>
            <person name="Honda T."/>
            <person name="Sasakawa C."/>
            <person name="Ogasawara N."/>
            <person name="Yasunaga T."/>
            <person name="Kuhara S."/>
            <person name="Shiba T."/>
            <person name="Hattori M."/>
            <person name="Shinagawa H."/>
        </authorList>
    </citation>
    <scope>NUCLEOTIDE SEQUENCE [LARGE SCALE GENOMIC DNA]</scope>
    <source>
        <strain>O157:H7 / Sakai / RIMD 0509952 / EHEC</strain>
    </source>
</reference>
<comment type="function">
    <text evidence="2">3'-to-5' exoribonuclease specific for small oligoribonucleotides.</text>
</comment>
<comment type="subunit">
    <text evidence="2">Homodimer.</text>
</comment>
<comment type="subcellular location">
    <subcellularLocation>
        <location evidence="2">Cytoplasm</location>
    </subcellularLocation>
</comment>
<comment type="similarity">
    <text evidence="2">Belongs to the oligoribonuclease family.</text>
</comment>
<comment type="sequence caution" evidence="3">
    <conflict type="erroneous initiation">
        <sequence resource="EMBL-CDS" id="AAG59361"/>
    </conflict>
    <text>Extended N-terminus.</text>
</comment>